<accession>A0K731</accession>
<keyword id="KW-0012">Acyltransferase</keyword>
<keyword id="KW-0963">Cytoplasm</keyword>
<keyword id="KW-0808">Transferase</keyword>
<evidence type="ECO:0000255" key="1">
    <source>
        <dbReference type="HAMAP-Rule" id="MF_00688"/>
    </source>
</evidence>
<reference key="1">
    <citation type="submission" date="2006-08" db="EMBL/GenBank/DDBJ databases">
        <title>Complete sequence of chromosome 1 of Burkholderia cenocepacia HI2424.</title>
        <authorList>
            <person name="Copeland A."/>
            <person name="Lucas S."/>
            <person name="Lapidus A."/>
            <person name="Barry K."/>
            <person name="Detter J.C."/>
            <person name="Glavina del Rio T."/>
            <person name="Hammon N."/>
            <person name="Israni S."/>
            <person name="Pitluck S."/>
            <person name="Chain P."/>
            <person name="Malfatti S."/>
            <person name="Shin M."/>
            <person name="Vergez L."/>
            <person name="Schmutz J."/>
            <person name="Larimer F."/>
            <person name="Land M."/>
            <person name="Hauser L."/>
            <person name="Kyrpides N."/>
            <person name="Kim E."/>
            <person name="LiPuma J.J."/>
            <person name="Gonzalez C.F."/>
            <person name="Konstantinidis K."/>
            <person name="Tiedje J.M."/>
            <person name="Richardson P."/>
        </authorList>
    </citation>
    <scope>NUCLEOTIDE SEQUENCE [LARGE SCALE GENOMIC DNA]</scope>
    <source>
        <strain>HI2424</strain>
    </source>
</reference>
<comment type="function">
    <text evidence="1">Functions in the N-end rule pathway of protein degradation where it conjugates Leu, Phe and, less efficiently, Met from aminoacyl-tRNAs to the N-termini of proteins containing an N-terminal arginine or lysine.</text>
</comment>
<comment type="catalytic activity">
    <reaction evidence="1">
        <text>N-terminal L-lysyl-[protein] + L-leucyl-tRNA(Leu) = N-terminal L-leucyl-L-lysyl-[protein] + tRNA(Leu) + H(+)</text>
        <dbReference type="Rhea" id="RHEA:12340"/>
        <dbReference type="Rhea" id="RHEA-COMP:9613"/>
        <dbReference type="Rhea" id="RHEA-COMP:9622"/>
        <dbReference type="Rhea" id="RHEA-COMP:12670"/>
        <dbReference type="Rhea" id="RHEA-COMP:12671"/>
        <dbReference type="ChEBI" id="CHEBI:15378"/>
        <dbReference type="ChEBI" id="CHEBI:65249"/>
        <dbReference type="ChEBI" id="CHEBI:78442"/>
        <dbReference type="ChEBI" id="CHEBI:78494"/>
        <dbReference type="ChEBI" id="CHEBI:133043"/>
        <dbReference type="EC" id="2.3.2.6"/>
    </reaction>
</comment>
<comment type="catalytic activity">
    <reaction evidence="1">
        <text>N-terminal L-arginyl-[protein] + L-leucyl-tRNA(Leu) = N-terminal L-leucyl-L-arginyl-[protein] + tRNA(Leu) + H(+)</text>
        <dbReference type="Rhea" id="RHEA:50416"/>
        <dbReference type="Rhea" id="RHEA-COMP:9613"/>
        <dbReference type="Rhea" id="RHEA-COMP:9622"/>
        <dbReference type="Rhea" id="RHEA-COMP:12672"/>
        <dbReference type="Rhea" id="RHEA-COMP:12673"/>
        <dbReference type="ChEBI" id="CHEBI:15378"/>
        <dbReference type="ChEBI" id="CHEBI:64719"/>
        <dbReference type="ChEBI" id="CHEBI:78442"/>
        <dbReference type="ChEBI" id="CHEBI:78494"/>
        <dbReference type="ChEBI" id="CHEBI:133044"/>
        <dbReference type="EC" id="2.3.2.6"/>
    </reaction>
</comment>
<comment type="catalytic activity">
    <reaction evidence="1">
        <text>L-phenylalanyl-tRNA(Phe) + an N-terminal L-alpha-aminoacyl-[protein] = an N-terminal L-phenylalanyl-L-alpha-aminoacyl-[protein] + tRNA(Phe)</text>
        <dbReference type="Rhea" id="RHEA:43632"/>
        <dbReference type="Rhea" id="RHEA-COMP:9668"/>
        <dbReference type="Rhea" id="RHEA-COMP:9699"/>
        <dbReference type="Rhea" id="RHEA-COMP:10636"/>
        <dbReference type="Rhea" id="RHEA-COMP:10637"/>
        <dbReference type="ChEBI" id="CHEBI:78442"/>
        <dbReference type="ChEBI" id="CHEBI:78531"/>
        <dbReference type="ChEBI" id="CHEBI:78597"/>
        <dbReference type="ChEBI" id="CHEBI:83561"/>
        <dbReference type="EC" id="2.3.2.6"/>
    </reaction>
</comment>
<comment type="subcellular location">
    <subcellularLocation>
        <location evidence="1">Cytoplasm</location>
    </subcellularLocation>
</comment>
<comment type="similarity">
    <text evidence="1">Belongs to the L/F-transferase family.</text>
</comment>
<organism>
    <name type="scientific">Burkholderia cenocepacia (strain HI2424)</name>
    <dbReference type="NCBI Taxonomy" id="331272"/>
    <lineage>
        <taxon>Bacteria</taxon>
        <taxon>Pseudomonadati</taxon>
        <taxon>Pseudomonadota</taxon>
        <taxon>Betaproteobacteria</taxon>
        <taxon>Burkholderiales</taxon>
        <taxon>Burkholderiaceae</taxon>
        <taxon>Burkholderia</taxon>
        <taxon>Burkholderia cepacia complex</taxon>
    </lineage>
</organism>
<proteinExistence type="inferred from homology"/>
<gene>
    <name evidence="1" type="primary">aat</name>
    <name type="ordered locus">Bcen2424_1556</name>
</gene>
<name>LFTR_BURCH</name>
<feature type="chain" id="PRO_0000304328" description="Leucyl/phenylalanyl-tRNA--protein transferase">
    <location>
        <begin position="1"/>
        <end position="254"/>
    </location>
</feature>
<protein>
    <recommendedName>
        <fullName evidence="1">Leucyl/phenylalanyl-tRNA--protein transferase</fullName>
        <ecNumber evidence="1">2.3.2.6</ecNumber>
    </recommendedName>
    <alternativeName>
        <fullName evidence="1">L/F-transferase</fullName>
    </alternativeName>
    <alternativeName>
        <fullName evidence="1">Leucyltransferase</fullName>
    </alternativeName>
    <alternativeName>
        <fullName evidence="1">Phenyalanyltransferase</fullName>
    </alternativeName>
</protein>
<dbReference type="EC" id="2.3.2.6" evidence="1"/>
<dbReference type="EMBL" id="CP000458">
    <property type="protein sequence ID" value="ABK08308.1"/>
    <property type="molecule type" value="Genomic_DNA"/>
</dbReference>
<dbReference type="RefSeq" id="WP_011545306.1">
    <property type="nucleotide sequence ID" value="NC_008542.1"/>
</dbReference>
<dbReference type="SMR" id="A0K731"/>
<dbReference type="KEGG" id="bch:Bcen2424_1556"/>
<dbReference type="HOGENOM" id="CLU_075045_0_0_4"/>
<dbReference type="GO" id="GO:0005737">
    <property type="term" value="C:cytoplasm"/>
    <property type="evidence" value="ECO:0007669"/>
    <property type="project" value="UniProtKB-SubCell"/>
</dbReference>
<dbReference type="GO" id="GO:0008914">
    <property type="term" value="F:leucyl-tRNA--protein transferase activity"/>
    <property type="evidence" value="ECO:0007669"/>
    <property type="project" value="UniProtKB-UniRule"/>
</dbReference>
<dbReference type="GO" id="GO:0030163">
    <property type="term" value="P:protein catabolic process"/>
    <property type="evidence" value="ECO:0007669"/>
    <property type="project" value="UniProtKB-UniRule"/>
</dbReference>
<dbReference type="Gene3D" id="3.40.630.70">
    <property type="entry name" value="Leucyl/phenylalanyl-tRNA-protein transferase, C-terminal domain"/>
    <property type="match status" value="1"/>
</dbReference>
<dbReference type="Gene3D" id="3.30.70.3550">
    <property type="entry name" value="Leucyl/phenylalanyl-tRNA-protein transferase, N-terminal domain"/>
    <property type="match status" value="1"/>
</dbReference>
<dbReference type="HAMAP" id="MF_00688">
    <property type="entry name" value="Leu_Phe_trans"/>
    <property type="match status" value="1"/>
</dbReference>
<dbReference type="InterPro" id="IPR016181">
    <property type="entry name" value="Acyl_CoA_acyltransferase"/>
</dbReference>
<dbReference type="InterPro" id="IPR004616">
    <property type="entry name" value="Leu/Phe-tRNA_Trfase"/>
</dbReference>
<dbReference type="InterPro" id="IPR042203">
    <property type="entry name" value="Leu/Phe-tRNA_Trfase_C"/>
</dbReference>
<dbReference type="InterPro" id="IPR042221">
    <property type="entry name" value="Leu/Phe-tRNA_Trfase_N"/>
</dbReference>
<dbReference type="NCBIfam" id="TIGR00667">
    <property type="entry name" value="aat"/>
    <property type="match status" value="1"/>
</dbReference>
<dbReference type="PANTHER" id="PTHR30098">
    <property type="entry name" value="LEUCYL/PHENYLALANYL-TRNA--PROTEIN TRANSFERASE"/>
    <property type="match status" value="1"/>
</dbReference>
<dbReference type="PANTHER" id="PTHR30098:SF2">
    <property type="entry name" value="LEUCYL_PHENYLALANYL-TRNA--PROTEIN TRANSFERASE"/>
    <property type="match status" value="1"/>
</dbReference>
<dbReference type="Pfam" id="PF03588">
    <property type="entry name" value="Leu_Phe_trans"/>
    <property type="match status" value="1"/>
</dbReference>
<dbReference type="SUPFAM" id="SSF55729">
    <property type="entry name" value="Acyl-CoA N-acyltransferases (Nat)"/>
    <property type="match status" value="1"/>
</dbReference>
<sequence>MVPWLGPDDPFPSIERALGPATGAPGLLAASADLLPSRLIDAYLRGIFPWYSDGQPVLWWSPDPRMILVPAEFKVSPSLRKTLKRVLRAPEWEVRVDHDFAGVMRACAQAPRRGQRGTWITAEIIDAYTSLYRSGNAHSIETWHDGRRVGGLYGVSFGRMFFGESMYADVTDASKIALAALIAHLREQRLEMIDCQQNTSHLASLGGREIARKAFVAHVRSAVAEPPIPWQFDKRVLAALTSPAETAAPTGTER</sequence>